<organism>
    <name type="scientific">Bos taurus</name>
    <name type="common">Bovine</name>
    <dbReference type="NCBI Taxonomy" id="9913"/>
    <lineage>
        <taxon>Eukaryota</taxon>
        <taxon>Metazoa</taxon>
        <taxon>Chordata</taxon>
        <taxon>Craniata</taxon>
        <taxon>Vertebrata</taxon>
        <taxon>Euteleostomi</taxon>
        <taxon>Mammalia</taxon>
        <taxon>Eutheria</taxon>
        <taxon>Laurasiatheria</taxon>
        <taxon>Artiodactyla</taxon>
        <taxon>Ruminantia</taxon>
        <taxon>Pecora</taxon>
        <taxon>Bovidae</taxon>
        <taxon>Bovinae</taxon>
        <taxon>Bos</taxon>
    </lineage>
</organism>
<protein>
    <recommendedName>
        <fullName>Thrombospondin type-1 domain-containing protein 1</fullName>
    </recommendedName>
</protein>
<gene>
    <name type="primary">THSD1</name>
</gene>
<comment type="function">
    <text evidence="2">Is a positive regulator of nascent focal adhesion assembly, involved in the modulation of endothelial cell attachment to the extracellular matrix.</text>
</comment>
<comment type="subunit">
    <text evidence="2">Part of a complex composed of THSD1, PTK2/FAK1, TLN1 and VCL. Interacts with TLN1.</text>
</comment>
<comment type="subcellular location">
    <subcellularLocation>
        <location evidence="2">Endosome membrane</location>
        <topology evidence="6">Single-pass type I membrane protein</topology>
    </subcellularLocation>
    <subcellularLocation>
        <location evidence="2">Cell junction</location>
        <location evidence="2">Focal adhesion</location>
    </subcellularLocation>
    <text evidence="2">Localizes to nascent focal adhesions.</text>
</comment>
<proteinExistence type="evidence at transcript level"/>
<accession>Q5BIR3</accession>
<dbReference type="EMBL" id="BT021161">
    <property type="protein sequence ID" value="AAX31343.1"/>
    <property type="molecule type" value="mRNA"/>
</dbReference>
<dbReference type="RefSeq" id="NP_001014967.1">
    <property type="nucleotide sequence ID" value="NM_001014967.1"/>
</dbReference>
<dbReference type="SMR" id="Q5BIR3"/>
<dbReference type="FunCoup" id="Q5BIR3">
    <property type="interactions" value="101"/>
</dbReference>
<dbReference type="STRING" id="9913.ENSBTAP00000027155"/>
<dbReference type="GlyCosmos" id="Q5BIR3">
    <property type="glycosylation" value="7 sites, No reported glycans"/>
</dbReference>
<dbReference type="GlyGen" id="Q5BIR3">
    <property type="glycosylation" value="7 sites"/>
</dbReference>
<dbReference type="iPTMnet" id="Q5BIR3"/>
<dbReference type="PaxDb" id="9913-ENSBTAP00000027155"/>
<dbReference type="GeneID" id="541228"/>
<dbReference type="KEGG" id="bta:541228"/>
<dbReference type="CTD" id="55901"/>
<dbReference type="eggNOG" id="ENOG502QY3P">
    <property type="taxonomic scope" value="Eukaryota"/>
</dbReference>
<dbReference type="InParanoid" id="Q5BIR3"/>
<dbReference type="OrthoDB" id="16692at2759"/>
<dbReference type="Proteomes" id="UP000009136">
    <property type="component" value="Unplaced"/>
</dbReference>
<dbReference type="GO" id="GO:0071944">
    <property type="term" value="C:cell periphery"/>
    <property type="evidence" value="ECO:0000318"/>
    <property type="project" value="GO_Central"/>
</dbReference>
<dbReference type="GO" id="GO:0005768">
    <property type="term" value="C:endosome"/>
    <property type="evidence" value="ECO:0000250"/>
    <property type="project" value="UniProtKB"/>
</dbReference>
<dbReference type="GO" id="GO:0010008">
    <property type="term" value="C:endosome membrane"/>
    <property type="evidence" value="ECO:0007669"/>
    <property type="project" value="UniProtKB-SubCell"/>
</dbReference>
<dbReference type="GO" id="GO:0005925">
    <property type="term" value="C:focal adhesion"/>
    <property type="evidence" value="ECO:0000250"/>
    <property type="project" value="UniProtKB"/>
</dbReference>
<dbReference type="GO" id="GO:0050840">
    <property type="term" value="F:extracellular matrix binding"/>
    <property type="evidence" value="ECO:0000250"/>
    <property type="project" value="UniProtKB"/>
</dbReference>
<dbReference type="GO" id="GO:0048041">
    <property type="term" value="P:focal adhesion assembly"/>
    <property type="evidence" value="ECO:0000250"/>
    <property type="project" value="UniProtKB"/>
</dbReference>
<dbReference type="FunFam" id="2.20.100.10:FF:000115">
    <property type="entry name" value="Thrombospondin type-1 domain-containing protein 1"/>
    <property type="match status" value="1"/>
</dbReference>
<dbReference type="Gene3D" id="2.20.100.10">
    <property type="entry name" value="Thrombospondin type-1 (TSP1) repeat"/>
    <property type="match status" value="1"/>
</dbReference>
<dbReference type="InterPro" id="IPR038877">
    <property type="entry name" value="THSD1"/>
</dbReference>
<dbReference type="InterPro" id="IPR056218">
    <property type="entry name" value="THSD1_D2"/>
</dbReference>
<dbReference type="InterPro" id="IPR056219">
    <property type="entry name" value="THSD1_D3"/>
</dbReference>
<dbReference type="InterPro" id="IPR056217">
    <property type="entry name" value="THSD1_N"/>
</dbReference>
<dbReference type="InterPro" id="IPR000884">
    <property type="entry name" value="TSP1_rpt"/>
</dbReference>
<dbReference type="InterPro" id="IPR036383">
    <property type="entry name" value="TSP1_rpt_sf"/>
</dbReference>
<dbReference type="PANTHER" id="PTHR16311">
    <property type="entry name" value="THROMBOSPONDIN TYPE I DOMAIN-CONTAINING 1"/>
    <property type="match status" value="1"/>
</dbReference>
<dbReference type="PANTHER" id="PTHR16311:SF3">
    <property type="entry name" value="THROMBOSPONDIN TYPE-1 DOMAIN-CONTAINING PROTEIN 1"/>
    <property type="match status" value="1"/>
</dbReference>
<dbReference type="Pfam" id="PF24310">
    <property type="entry name" value="THSD1_D2"/>
    <property type="match status" value="1"/>
</dbReference>
<dbReference type="Pfam" id="PF24311">
    <property type="entry name" value="THSD1_D3"/>
    <property type="match status" value="1"/>
</dbReference>
<dbReference type="Pfam" id="PF24306">
    <property type="entry name" value="THSD1_N"/>
    <property type="match status" value="1"/>
</dbReference>
<dbReference type="Pfam" id="PF00090">
    <property type="entry name" value="TSP_1"/>
    <property type="match status" value="1"/>
</dbReference>
<dbReference type="SMART" id="SM00209">
    <property type="entry name" value="TSP1"/>
    <property type="match status" value="1"/>
</dbReference>
<dbReference type="SUPFAM" id="SSF82895">
    <property type="entry name" value="TSP-1 type 1 repeat"/>
    <property type="match status" value="1"/>
</dbReference>
<dbReference type="PROSITE" id="PS50092">
    <property type="entry name" value="TSP1"/>
    <property type="match status" value="1"/>
</dbReference>
<evidence type="ECO:0000250" key="1">
    <source>
        <dbReference type="UniProtKB" id="Q9JM61"/>
    </source>
</evidence>
<evidence type="ECO:0000250" key="2">
    <source>
        <dbReference type="UniProtKB" id="Q9NS62"/>
    </source>
</evidence>
<evidence type="ECO:0000255" key="3"/>
<evidence type="ECO:0000255" key="4">
    <source>
        <dbReference type="PROSITE-ProRule" id="PRU00210"/>
    </source>
</evidence>
<evidence type="ECO:0000256" key="5">
    <source>
        <dbReference type="SAM" id="MobiDB-lite"/>
    </source>
</evidence>
<evidence type="ECO:0000305" key="6"/>
<feature type="signal peptide" evidence="3">
    <location>
        <begin position="1"/>
        <end position="24"/>
    </location>
</feature>
<feature type="chain" id="PRO_0000249583" description="Thrombospondin type-1 domain-containing protein 1">
    <location>
        <begin position="25"/>
        <end position="849"/>
    </location>
</feature>
<feature type="topological domain" description="Extracellular" evidence="3">
    <location>
        <begin position="25"/>
        <end position="413"/>
    </location>
</feature>
<feature type="transmembrane region" description="Helical" evidence="3">
    <location>
        <begin position="414"/>
        <end position="434"/>
    </location>
</feature>
<feature type="topological domain" description="Cytoplasmic" evidence="3">
    <location>
        <begin position="435"/>
        <end position="849"/>
    </location>
</feature>
<feature type="domain" description="TSP type-1" evidence="4">
    <location>
        <begin position="340"/>
        <end position="393"/>
    </location>
</feature>
<feature type="region of interest" description="Disordered" evidence="5">
    <location>
        <begin position="472"/>
        <end position="516"/>
    </location>
</feature>
<feature type="region of interest" description="Disordered" evidence="5">
    <location>
        <begin position="595"/>
        <end position="799"/>
    </location>
</feature>
<feature type="region of interest" description="Disordered" evidence="5">
    <location>
        <begin position="828"/>
        <end position="849"/>
    </location>
</feature>
<feature type="compositionally biased region" description="Low complexity" evidence="5">
    <location>
        <begin position="479"/>
        <end position="493"/>
    </location>
</feature>
<feature type="compositionally biased region" description="Basic residues" evidence="5">
    <location>
        <begin position="636"/>
        <end position="651"/>
    </location>
</feature>
<feature type="compositionally biased region" description="Basic and acidic residues" evidence="5">
    <location>
        <begin position="652"/>
        <end position="666"/>
    </location>
</feature>
<feature type="compositionally biased region" description="Pro residues" evidence="5">
    <location>
        <begin position="720"/>
        <end position="732"/>
    </location>
</feature>
<feature type="modified residue" description="Phosphoserine" evidence="1">
    <location>
        <position position="463"/>
    </location>
</feature>
<feature type="glycosylation site" description="N-linked (GlcNAc...) asparagine" evidence="3">
    <location>
        <position position="39"/>
    </location>
</feature>
<feature type="glycosylation site" description="N-linked (GlcNAc...) asparagine" evidence="3">
    <location>
        <position position="50"/>
    </location>
</feature>
<feature type="glycosylation site" description="N-linked (GlcNAc...) asparagine" evidence="3">
    <location>
        <position position="55"/>
    </location>
</feature>
<feature type="glycosylation site" description="N-linked (GlcNAc...) asparagine" evidence="3">
    <location>
        <position position="66"/>
    </location>
</feature>
<feature type="glycosylation site" description="N-linked (GlcNAc...) asparagine" evidence="3">
    <location>
        <position position="77"/>
    </location>
</feature>
<feature type="glycosylation site" description="N-linked (GlcNAc...) asparagine" evidence="3">
    <location>
        <position position="106"/>
    </location>
</feature>
<feature type="glycosylation site" description="N-linked (GlcNAc...) asparagine" evidence="3">
    <location>
        <position position="303"/>
    </location>
</feature>
<feature type="disulfide bond" evidence="4">
    <location>
        <begin position="352"/>
        <end position="387"/>
    </location>
</feature>
<feature type="disulfide bond" evidence="4">
    <location>
        <begin position="356"/>
        <end position="392"/>
    </location>
</feature>
<feature type="disulfide bond" evidence="4">
    <location>
        <begin position="367"/>
        <end position="377"/>
    </location>
</feature>
<keyword id="KW-0965">Cell junction</keyword>
<keyword id="KW-1015">Disulfide bond</keyword>
<keyword id="KW-0967">Endosome</keyword>
<keyword id="KW-0325">Glycoprotein</keyword>
<keyword id="KW-0472">Membrane</keyword>
<keyword id="KW-0597">Phosphoprotein</keyword>
<keyword id="KW-1185">Reference proteome</keyword>
<keyword id="KW-0732">Signal</keyword>
<keyword id="KW-0812">Transmembrane</keyword>
<keyword id="KW-1133">Transmembrane helix</keyword>
<sequence length="849" mass="92050">MKQTLKDFSNLLLVVLCDYVLGEAEHLVLGEPGHVALSNSTVTVDFHGANGTLRNVSVLLVEASSNQTLTTKYLLTNQSQGTLEFECFYFKEAGDYWFVMTREATNSSLPVPPRERSAFLKVEWPVFHVDLSRTSMAAEGTFQVGLFTSQPLCPFPGDKPDILLEVTFTNSLPEARAGQALPLEIRASKRVELAQGQWVEFDCPPVGPEAYVTVTVVLKLLGRDSVIMSTGPIDLAQKFGYKLVMEPELTCEAGVEVTVLPPPCIFVQGVIAVFKEAPRLPGERTNRLAENSLALGERRTGFNCTLFDMGRNKYCFDFGVSSQSQFSAKEKECMLIRRSIETWGLWQPWSQCSASCGDGVRERRRVCLTSSPSRPGCPGMSSETSPCSLEDCAAFQPSSPSPLQPQAPVKSNNVVTVTGISLCLFIIVATVLITLWRKLGRAPKCSTPARHNSLHGPGCRKNSDEENICELSEPRGSFSDAGDGPAGSPGDPGIPLTYRRSVPAPPDDEASGSESFQANAQKIIPPLFSYRLAQQQLKEMKKKGLTETTKVYHVSQSPLTDTAIDAAATAAAAAAASPGGSESPEEAAAGKFRIKSPFLEHPPTVGAGDRPPSRLDHPFSAASCAVSPSQTLLRKSQVRSHSRGSHFRRTASFHEARQARPFRERSLSTLTPRPTPAHGPRARTWDQAGERGRPPSRGTALFPEKRDHGPGAAGASGPLSPLPKPHSLGPPPRKPDLGDRQAGFVGAGERPEPPRARRGPSPSHRSVSRKQPSPPAPKDGYQRVSPLSPSQGRKDKCQSFPAHPEFAFYDNTSFGLTEAEQRMLDLPGYFGSNEEDETTSTLSVEKLVI</sequence>
<name>THSD1_BOVIN</name>
<reference key="1">
    <citation type="journal article" date="2005" name="BMC Genomics">
        <title>Characterization of 954 bovine full-CDS cDNA sequences.</title>
        <authorList>
            <person name="Harhay G.P."/>
            <person name="Sonstegard T.S."/>
            <person name="Keele J.W."/>
            <person name="Heaton M.P."/>
            <person name="Clawson M.L."/>
            <person name="Snelling W.M."/>
            <person name="Wiedmann R.T."/>
            <person name="Van Tassell C.P."/>
            <person name="Smith T.P.L."/>
        </authorList>
    </citation>
    <scope>NUCLEOTIDE SEQUENCE [LARGE SCALE MRNA]</scope>
</reference>